<feature type="chain" id="PRO_0000346936" description="Uncharacterized protein DDB_G0289969">
    <location>
        <begin position="1"/>
        <end position="71"/>
    </location>
</feature>
<feature type="region of interest" description="Disordered" evidence="1">
    <location>
        <begin position="1"/>
        <end position="71"/>
    </location>
</feature>
<feature type="compositionally biased region" description="Polar residues" evidence="1">
    <location>
        <begin position="7"/>
        <end position="33"/>
    </location>
</feature>
<feature type="compositionally biased region" description="Low complexity" evidence="1">
    <location>
        <begin position="35"/>
        <end position="65"/>
    </location>
</feature>
<evidence type="ECO:0000256" key="1">
    <source>
        <dbReference type="SAM" id="MobiDB-lite"/>
    </source>
</evidence>
<name>Y9499_DICDI</name>
<organism>
    <name type="scientific">Dictyostelium discoideum</name>
    <name type="common">Social amoeba</name>
    <dbReference type="NCBI Taxonomy" id="44689"/>
    <lineage>
        <taxon>Eukaryota</taxon>
        <taxon>Amoebozoa</taxon>
        <taxon>Evosea</taxon>
        <taxon>Eumycetozoa</taxon>
        <taxon>Dictyostelia</taxon>
        <taxon>Dictyosteliales</taxon>
        <taxon>Dictyosteliaceae</taxon>
        <taxon>Dictyostelium</taxon>
    </lineage>
</organism>
<gene>
    <name type="ORF">DDB_G0289969</name>
</gene>
<dbReference type="EMBL" id="AAFI02000149">
    <property type="protein sequence ID" value="EAL62497.1"/>
    <property type="molecule type" value="Genomic_DNA"/>
</dbReference>
<dbReference type="RefSeq" id="XP_635967.1">
    <property type="nucleotide sequence ID" value="XM_630875.1"/>
</dbReference>
<dbReference type="PaxDb" id="44689-DDB0219499"/>
<dbReference type="EnsemblProtists" id="EAL62497">
    <property type="protein sequence ID" value="EAL62497"/>
    <property type="gene ID" value="DDB_G0289969"/>
</dbReference>
<dbReference type="GeneID" id="8627382"/>
<dbReference type="KEGG" id="ddi:DDB_G0289969"/>
<dbReference type="dictyBase" id="DDB_G0289969"/>
<dbReference type="HOGENOM" id="CLU_2745369_0_0_1"/>
<dbReference type="InParanoid" id="Q54GV2"/>
<dbReference type="PRO" id="PR:Q54GV2"/>
<dbReference type="Proteomes" id="UP000002195">
    <property type="component" value="Chromosome 5"/>
</dbReference>
<protein>
    <recommendedName>
        <fullName>Uncharacterized protein DDB_G0289969</fullName>
    </recommendedName>
</protein>
<reference key="1">
    <citation type="journal article" date="2005" name="Nature">
        <title>The genome of the social amoeba Dictyostelium discoideum.</title>
        <authorList>
            <person name="Eichinger L."/>
            <person name="Pachebat J.A."/>
            <person name="Gloeckner G."/>
            <person name="Rajandream M.A."/>
            <person name="Sucgang R."/>
            <person name="Berriman M."/>
            <person name="Song J."/>
            <person name="Olsen R."/>
            <person name="Szafranski K."/>
            <person name="Xu Q."/>
            <person name="Tunggal B."/>
            <person name="Kummerfeld S."/>
            <person name="Madera M."/>
            <person name="Konfortov B.A."/>
            <person name="Rivero F."/>
            <person name="Bankier A.T."/>
            <person name="Lehmann R."/>
            <person name="Hamlin N."/>
            <person name="Davies R."/>
            <person name="Gaudet P."/>
            <person name="Fey P."/>
            <person name="Pilcher K."/>
            <person name="Chen G."/>
            <person name="Saunders D."/>
            <person name="Sodergren E.J."/>
            <person name="Davis P."/>
            <person name="Kerhornou A."/>
            <person name="Nie X."/>
            <person name="Hall N."/>
            <person name="Anjard C."/>
            <person name="Hemphill L."/>
            <person name="Bason N."/>
            <person name="Farbrother P."/>
            <person name="Desany B."/>
            <person name="Just E."/>
            <person name="Morio T."/>
            <person name="Rost R."/>
            <person name="Churcher C.M."/>
            <person name="Cooper J."/>
            <person name="Haydock S."/>
            <person name="van Driessche N."/>
            <person name="Cronin A."/>
            <person name="Goodhead I."/>
            <person name="Muzny D.M."/>
            <person name="Mourier T."/>
            <person name="Pain A."/>
            <person name="Lu M."/>
            <person name="Harper D."/>
            <person name="Lindsay R."/>
            <person name="Hauser H."/>
            <person name="James K.D."/>
            <person name="Quiles M."/>
            <person name="Madan Babu M."/>
            <person name="Saito T."/>
            <person name="Buchrieser C."/>
            <person name="Wardroper A."/>
            <person name="Felder M."/>
            <person name="Thangavelu M."/>
            <person name="Johnson D."/>
            <person name="Knights A."/>
            <person name="Loulseged H."/>
            <person name="Mungall K.L."/>
            <person name="Oliver K."/>
            <person name="Price C."/>
            <person name="Quail M.A."/>
            <person name="Urushihara H."/>
            <person name="Hernandez J."/>
            <person name="Rabbinowitsch E."/>
            <person name="Steffen D."/>
            <person name="Sanders M."/>
            <person name="Ma J."/>
            <person name="Kohara Y."/>
            <person name="Sharp S."/>
            <person name="Simmonds M.N."/>
            <person name="Spiegler S."/>
            <person name="Tivey A."/>
            <person name="Sugano S."/>
            <person name="White B."/>
            <person name="Walker D."/>
            <person name="Woodward J.R."/>
            <person name="Winckler T."/>
            <person name="Tanaka Y."/>
            <person name="Shaulsky G."/>
            <person name="Schleicher M."/>
            <person name="Weinstock G.M."/>
            <person name="Rosenthal A."/>
            <person name="Cox E.C."/>
            <person name="Chisholm R.L."/>
            <person name="Gibbs R.A."/>
            <person name="Loomis W.F."/>
            <person name="Platzer M."/>
            <person name="Kay R.R."/>
            <person name="Williams J.G."/>
            <person name="Dear P.H."/>
            <person name="Noegel A.A."/>
            <person name="Barrell B.G."/>
            <person name="Kuspa A."/>
        </authorList>
    </citation>
    <scope>NUCLEOTIDE SEQUENCE [LARGE SCALE GENOMIC DNA]</scope>
    <source>
        <strain>AX4</strain>
    </source>
</reference>
<keyword id="KW-1185">Reference proteome</keyword>
<accession>Q54GV2</accession>
<proteinExistence type="predicted"/>
<sequence length="71" mass="7711">MLFETLKSLSQQNGGQFSDEQSFESPISSSFNGHSMPFGSPSSTMSSSYKGNTNSSTKSSSAFFSRPFYSE</sequence>